<comment type="miscellaneous">
    <text evidence="2">Partially overlaps TRM5.</text>
</comment>
<comment type="caution">
    <text evidence="3">Product of a dubious gene prediction unlikely to encode a functional protein. Because of that it is not part of the S.cerevisiae S288c complete/reference proteome set.</text>
</comment>
<reference key="1">
    <citation type="journal article" date="1994" name="Science">
        <title>Complete nucleotide sequence of Saccharomyces cerevisiae chromosome VIII.</title>
        <authorList>
            <person name="Johnston M."/>
            <person name="Andrews S."/>
            <person name="Brinkman R."/>
            <person name="Cooper J."/>
            <person name="Ding H."/>
            <person name="Dover J."/>
            <person name="Du Z."/>
            <person name="Favello A."/>
            <person name="Fulton L."/>
            <person name="Gattung S."/>
            <person name="Geisel C."/>
            <person name="Kirsten J."/>
            <person name="Kucaba T."/>
            <person name="Hillier L.W."/>
            <person name="Jier M."/>
            <person name="Johnston L."/>
            <person name="Langston Y."/>
            <person name="Latreille P."/>
            <person name="Louis E.J."/>
            <person name="Macri C."/>
            <person name="Mardis E."/>
            <person name="Menezes S."/>
            <person name="Mouser L."/>
            <person name="Nhan M."/>
            <person name="Rifkin L."/>
            <person name="Riles L."/>
            <person name="St Peter H."/>
            <person name="Trevaskis E."/>
            <person name="Vaughan K."/>
            <person name="Vignati D."/>
            <person name="Wilcox L."/>
            <person name="Wohldman P."/>
            <person name="Waterston R."/>
            <person name="Wilson R."/>
            <person name="Vaudin M."/>
        </authorList>
    </citation>
    <scope>NUCLEOTIDE SEQUENCE [LARGE SCALE GENOMIC DNA]</scope>
    <source>
        <strain>ATCC 204508 / S288c</strain>
    </source>
</reference>
<reference key="2">
    <citation type="journal article" date="2014" name="G3 (Bethesda)">
        <title>The reference genome sequence of Saccharomyces cerevisiae: Then and now.</title>
        <authorList>
            <person name="Engel S.R."/>
            <person name="Dietrich F.S."/>
            <person name="Fisk D.G."/>
            <person name="Binkley G."/>
            <person name="Balakrishnan R."/>
            <person name="Costanzo M.C."/>
            <person name="Dwight S.S."/>
            <person name="Hitz B.C."/>
            <person name="Karra K."/>
            <person name="Nash R.S."/>
            <person name="Weng S."/>
            <person name="Wong E.D."/>
            <person name="Lloyd P."/>
            <person name="Skrzypek M.S."/>
            <person name="Miyasato S.R."/>
            <person name="Simison M."/>
            <person name="Cherry J.M."/>
        </authorList>
    </citation>
    <scope>GENOME REANNOTATION</scope>
    <source>
        <strain>ATCC 204508 / S288c</strain>
    </source>
</reference>
<keyword id="KW-0732">Signal</keyword>
<accession>A0A023PYH0</accession>
<sequence length="136" mass="15284">MTHRAVPCQPRAFSKIKVLVISFLFLMVAFLPFSSHGKLQEQIASYVSWKLETRAIHRFGGCNFAHQMQRNGIQRKIVCSDLERGNNTGMNACMQLVLSDLVARRVLLKTVHVHPWHLDGISGAFSVCCKDATEVS</sequence>
<gene>
    <name evidence="4" type="ordered locus">YHR070C-A</name>
</gene>
<organism>
    <name type="scientific">Saccharomyces cerevisiae (strain ATCC 204508 / S288c)</name>
    <name type="common">Baker's yeast</name>
    <dbReference type="NCBI Taxonomy" id="559292"/>
    <lineage>
        <taxon>Eukaryota</taxon>
        <taxon>Fungi</taxon>
        <taxon>Dikarya</taxon>
        <taxon>Ascomycota</taxon>
        <taxon>Saccharomycotina</taxon>
        <taxon>Saccharomycetes</taxon>
        <taxon>Saccharomycetales</taxon>
        <taxon>Saccharomycetaceae</taxon>
        <taxon>Saccharomyces</taxon>
    </lineage>
</organism>
<proteinExistence type="uncertain"/>
<name>YH070_YEAST</name>
<evidence type="ECO:0000255" key="1"/>
<evidence type="ECO:0000305" key="2"/>
<evidence type="ECO:0000305" key="3">
    <source>
    </source>
</evidence>
<evidence type="ECO:0000312" key="4">
    <source>
        <dbReference type="SGD" id="S000028780"/>
    </source>
</evidence>
<protein>
    <recommendedName>
        <fullName evidence="2">Putative uncharacterized protein YHR070C-A</fullName>
    </recommendedName>
</protein>
<feature type="signal peptide" evidence="1">
    <location>
        <begin position="1"/>
        <end position="35"/>
    </location>
</feature>
<feature type="chain" id="PRO_0000431024" description="Putative uncharacterized protein YHR070C-A">
    <location>
        <begin position="36"/>
        <end position="136"/>
    </location>
</feature>
<dbReference type="EMBL" id="KJ412260">
    <property type="protein sequence ID" value="AHX39303.1"/>
    <property type="molecule type" value="Genomic_DNA"/>
</dbReference>
<dbReference type="PaxDb" id="4932-YHR070C-A"/>
<dbReference type="EnsemblFungi" id="YHR070C-A_mRNA">
    <property type="protein sequence ID" value="YHR070C-A"/>
    <property type="gene ID" value="YHR070C-A"/>
</dbReference>
<dbReference type="AGR" id="SGD:S000028780"/>
<dbReference type="SGD" id="S000028780">
    <property type="gene designation" value="YHR070C-A"/>
</dbReference>
<dbReference type="HOGENOM" id="CLU_1876609_0_0_1"/>